<protein>
    <recommendedName>
        <fullName>Protein psiD</fullName>
    </recommendedName>
</protein>
<evidence type="ECO:0000255" key="1"/>
<evidence type="ECO:0000255" key="2">
    <source>
        <dbReference type="PROSITE-ProRule" id="PRU01164"/>
    </source>
</evidence>
<evidence type="ECO:0000256" key="3">
    <source>
        <dbReference type="SAM" id="MobiDB-lite"/>
    </source>
</evidence>
<evidence type="ECO:0000305" key="4"/>
<organism>
    <name type="scientific">Dictyostelium discoideum</name>
    <name type="common">Social amoeba</name>
    <dbReference type="NCBI Taxonomy" id="44689"/>
    <lineage>
        <taxon>Eukaryota</taxon>
        <taxon>Amoebozoa</taxon>
        <taxon>Evosea</taxon>
        <taxon>Eumycetozoa</taxon>
        <taxon>Dictyostelia</taxon>
        <taxon>Dictyosteliales</taxon>
        <taxon>Dictyosteliaceae</taxon>
        <taxon>Dictyostelium</taxon>
    </lineage>
</organism>
<comment type="subcellular location">
    <subcellularLocation>
        <location evidence="4">Secreted</location>
    </subcellularLocation>
</comment>
<comment type="similarity">
    <text evidence="4">Belongs to the prespore-cell-inducing factor family.</text>
</comment>
<dbReference type="EMBL" id="AAFI02000172">
    <property type="protein sequence ID" value="EAL61978.1"/>
    <property type="molecule type" value="Genomic_DNA"/>
</dbReference>
<dbReference type="RefSeq" id="XP_635484.1">
    <property type="nucleotide sequence ID" value="XM_630392.1"/>
</dbReference>
<dbReference type="FunCoup" id="Q54FD8">
    <property type="interactions" value="1"/>
</dbReference>
<dbReference type="GlyCosmos" id="Q54FD8">
    <property type="glycosylation" value="7 sites, No reported glycans"/>
</dbReference>
<dbReference type="GlyGen" id="Q54FD8">
    <property type="glycosylation" value="12 sites"/>
</dbReference>
<dbReference type="PaxDb" id="44689-DDB0231648"/>
<dbReference type="EnsemblProtists" id="EAL61978">
    <property type="protein sequence ID" value="EAL61978"/>
    <property type="gene ID" value="DDB_G0290925"/>
</dbReference>
<dbReference type="GeneID" id="8627900"/>
<dbReference type="KEGG" id="ddi:DDB_G0290925"/>
<dbReference type="dictyBase" id="DDB_G0290925">
    <property type="gene designation" value="psiD"/>
</dbReference>
<dbReference type="VEuPathDB" id="AmoebaDB:DDB_G0290925"/>
<dbReference type="eggNOG" id="ENOG502RDMQ">
    <property type="taxonomic scope" value="Eukaryota"/>
</dbReference>
<dbReference type="HOGENOM" id="CLU_528332_0_0_1"/>
<dbReference type="InParanoid" id="Q54FD8"/>
<dbReference type="OMA" id="FHFCMKI"/>
<dbReference type="PhylomeDB" id="Q54FD8"/>
<dbReference type="PRO" id="PR:Q54FD8"/>
<dbReference type="Proteomes" id="UP000002195">
    <property type="component" value="Chromosome 5"/>
</dbReference>
<dbReference type="GO" id="GO:0005576">
    <property type="term" value="C:extracellular region"/>
    <property type="evidence" value="ECO:0000318"/>
    <property type="project" value="GO_Central"/>
</dbReference>
<dbReference type="InterPro" id="IPR011874">
    <property type="entry name" value="Fibro_Slime"/>
</dbReference>
<dbReference type="InterPro" id="IPR037524">
    <property type="entry name" value="PA14/GLEYA"/>
</dbReference>
<dbReference type="InterPro" id="IPR011658">
    <property type="entry name" value="PA14_dom"/>
</dbReference>
<dbReference type="InterPro" id="IPR051154">
    <property type="entry name" value="Prespore-cell_inducing_factor"/>
</dbReference>
<dbReference type="NCBIfam" id="TIGR02148">
    <property type="entry name" value="Fibro_Slime"/>
    <property type="match status" value="1"/>
</dbReference>
<dbReference type="PANTHER" id="PTHR31137">
    <property type="entry name" value="PROTEIN PSIB-RELATED-RELATED"/>
    <property type="match status" value="1"/>
</dbReference>
<dbReference type="PANTHER" id="PTHR31137:SF13">
    <property type="entry name" value="PROTEIN PSID"/>
    <property type="match status" value="1"/>
</dbReference>
<dbReference type="Pfam" id="PF07691">
    <property type="entry name" value="PA14"/>
    <property type="match status" value="1"/>
</dbReference>
<dbReference type="SMART" id="SM00758">
    <property type="entry name" value="PA14"/>
    <property type="match status" value="1"/>
</dbReference>
<dbReference type="PROSITE" id="PS51820">
    <property type="entry name" value="PA14"/>
    <property type="match status" value="1"/>
</dbReference>
<proteinExistence type="inferred from homology"/>
<accession>Q54FD8</accession>
<name>PSID_DICDI</name>
<gene>
    <name type="primary">psiD</name>
    <name type="ORF">DDB_G0290925</name>
</gene>
<feature type="signal peptide" evidence="1">
    <location>
        <begin position="1"/>
        <end position="21"/>
    </location>
</feature>
<feature type="chain" id="PRO_0000327552" description="Protein psiD">
    <location>
        <begin position="22"/>
        <end position="504"/>
    </location>
</feature>
<feature type="domain" description="PA14" evidence="2">
    <location>
        <begin position="111"/>
        <end position="251"/>
    </location>
</feature>
<feature type="region of interest" description="Disordered" evidence="3">
    <location>
        <begin position="417"/>
        <end position="453"/>
    </location>
</feature>
<feature type="compositionally biased region" description="Low complexity" evidence="3">
    <location>
        <begin position="417"/>
        <end position="430"/>
    </location>
</feature>
<feature type="compositionally biased region" description="Pro residues" evidence="3">
    <location>
        <begin position="431"/>
        <end position="453"/>
    </location>
</feature>
<feature type="glycosylation site" description="N-linked (GlcNAc...) asparagine" evidence="1">
    <location>
        <position position="87"/>
    </location>
</feature>
<feature type="glycosylation site" description="N-linked (GlcNAc...) asparagine" evidence="1">
    <location>
        <position position="136"/>
    </location>
</feature>
<feature type="glycosylation site" description="N-linked (GlcNAc...) asparagine" evidence="1">
    <location>
        <position position="236"/>
    </location>
</feature>
<feature type="glycosylation site" description="N-linked (GlcNAc...) asparagine" evidence="1">
    <location>
        <position position="252"/>
    </location>
</feature>
<feature type="glycosylation site" description="N-linked (GlcNAc...) asparagine" evidence="1">
    <location>
        <position position="290"/>
    </location>
</feature>
<feature type="glycosylation site" description="N-linked (GlcNAc...) asparagine" evidence="1">
    <location>
        <position position="373"/>
    </location>
</feature>
<feature type="glycosylation site" description="N-linked (GlcNAc...) asparagine" evidence="1">
    <location>
        <position position="483"/>
    </location>
</feature>
<reference key="1">
    <citation type="journal article" date="2005" name="Nature">
        <title>The genome of the social amoeba Dictyostelium discoideum.</title>
        <authorList>
            <person name="Eichinger L."/>
            <person name="Pachebat J.A."/>
            <person name="Gloeckner G."/>
            <person name="Rajandream M.A."/>
            <person name="Sucgang R."/>
            <person name="Berriman M."/>
            <person name="Song J."/>
            <person name="Olsen R."/>
            <person name="Szafranski K."/>
            <person name="Xu Q."/>
            <person name="Tunggal B."/>
            <person name="Kummerfeld S."/>
            <person name="Madera M."/>
            <person name="Konfortov B.A."/>
            <person name="Rivero F."/>
            <person name="Bankier A.T."/>
            <person name="Lehmann R."/>
            <person name="Hamlin N."/>
            <person name="Davies R."/>
            <person name="Gaudet P."/>
            <person name="Fey P."/>
            <person name="Pilcher K."/>
            <person name="Chen G."/>
            <person name="Saunders D."/>
            <person name="Sodergren E.J."/>
            <person name="Davis P."/>
            <person name="Kerhornou A."/>
            <person name="Nie X."/>
            <person name="Hall N."/>
            <person name="Anjard C."/>
            <person name="Hemphill L."/>
            <person name="Bason N."/>
            <person name="Farbrother P."/>
            <person name="Desany B."/>
            <person name="Just E."/>
            <person name="Morio T."/>
            <person name="Rost R."/>
            <person name="Churcher C.M."/>
            <person name="Cooper J."/>
            <person name="Haydock S."/>
            <person name="van Driessche N."/>
            <person name="Cronin A."/>
            <person name="Goodhead I."/>
            <person name="Muzny D.M."/>
            <person name="Mourier T."/>
            <person name="Pain A."/>
            <person name="Lu M."/>
            <person name="Harper D."/>
            <person name="Lindsay R."/>
            <person name="Hauser H."/>
            <person name="James K.D."/>
            <person name="Quiles M."/>
            <person name="Madan Babu M."/>
            <person name="Saito T."/>
            <person name="Buchrieser C."/>
            <person name="Wardroper A."/>
            <person name="Felder M."/>
            <person name="Thangavelu M."/>
            <person name="Johnson D."/>
            <person name="Knights A."/>
            <person name="Loulseged H."/>
            <person name="Mungall K.L."/>
            <person name="Oliver K."/>
            <person name="Price C."/>
            <person name="Quail M.A."/>
            <person name="Urushihara H."/>
            <person name="Hernandez J."/>
            <person name="Rabbinowitsch E."/>
            <person name="Steffen D."/>
            <person name="Sanders M."/>
            <person name="Ma J."/>
            <person name="Kohara Y."/>
            <person name="Sharp S."/>
            <person name="Simmonds M.N."/>
            <person name="Spiegler S."/>
            <person name="Tivey A."/>
            <person name="Sugano S."/>
            <person name="White B."/>
            <person name="Walker D."/>
            <person name="Woodward J.R."/>
            <person name="Winckler T."/>
            <person name="Tanaka Y."/>
            <person name="Shaulsky G."/>
            <person name="Schleicher M."/>
            <person name="Weinstock G.M."/>
            <person name="Rosenthal A."/>
            <person name="Cox E.C."/>
            <person name="Chisholm R.L."/>
            <person name="Gibbs R.A."/>
            <person name="Loomis W.F."/>
            <person name="Platzer M."/>
            <person name="Kay R.R."/>
            <person name="Williams J.G."/>
            <person name="Dear P.H."/>
            <person name="Noegel A.A."/>
            <person name="Barrell B.G."/>
            <person name="Kuspa A."/>
        </authorList>
    </citation>
    <scope>NUCLEOTIDE SEQUENCE [LARGE SCALE GENOMIC DNA]</scope>
    <source>
        <strain>AX4</strain>
    </source>
</reference>
<keyword id="KW-0325">Glycoprotein</keyword>
<keyword id="KW-1185">Reference proteome</keyword>
<keyword id="KW-0964">Secreted</keyword>
<keyword id="KW-0732">Signal</keyword>
<sequence>MKYSYLLLILLLSNLYKEGFSQGQPDSIVLSATIYDESPIVTDFEIETYYNGVVEGIVQPDLGADGTPVYCCGDSPVTENGRIVVHNQSTFYSWFHSVPGVNVPIPYDLTLTRVGDSTYAYQSNSFFPIDGNGFDNSTVYPNEPHYLGHNFHFCMKIHYSFTYHGGEYFTFSGDDDVWVFFDDVLRIDIGGIHTAASRTVNMDDLGLTVGQSYPWDFFYCERHTSQSTLNIITNLNFTCSAYDACGVCDGHNDTCCMVNQCSESPINPCLIQACGPDNNYQCEFVDKICNTTNDKCLVESCEIGFGCLAIPKNCNDNDPCTTDHCDPAIGCYYDKFDNCDACNAVDTCITNDLCFPRECNPRGNPPCLINPINCTSTDPCIFSYCENGVCIPTYICTPTPSVTPTVTPTVTPTVTPTVTPTVTPTVTPTPTTTPTPSPTTVPPRPTPTPLPADPPPYDLEEGCLVCRDLDCEKTGKSCTYLENETIRLFECKGVGCCKYTPTCY</sequence>